<reference key="1">
    <citation type="journal article" date="2003" name="Science">
        <title>Role of mobile DNA in the evolution of vancomycin-resistant Enterococcus faecalis.</title>
        <authorList>
            <person name="Paulsen I.T."/>
            <person name="Banerjei L."/>
            <person name="Myers G.S.A."/>
            <person name="Nelson K.E."/>
            <person name="Seshadri R."/>
            <person name="Read T.D."/>
            <person name="Fouts D.E."/>
            <person name="Eisen J.A."/>
            <person name="Gill S.R."/>
            <person name="Heidelberg J.F."/>
            <person name="Tettelin H."/>
            <person name="Dodson R.J."/>
            <person name="Umayam L.A."/>
            <person name="Brinkac L.M."/>
            <person name="Beanan M.J."/>
            <person name="Daugherty S.C."/>
            <person name="DeBoy R.T."/>
            <person name="Durkin S.A."/>
            <person name="Kolonay J.F."/>
            <person name="Madupu R."/>
            <person name="Nelson W.C."/>
            <person name="Vamathevan J.J."/>
            <person name="Tran B."/>
            <person name="Upton J."/>
            <person name="Hansen T."/>
            <person name="Shetty J."/>
            <person name="Khouri H.M."/>
            <person name="Utterback T.R."/>
            <person name="Radune D."/>
            <person name="Ketchum K.A."/>
            <person name="Dougherty B.A."/>
            <person name="Fraser C.M."/>
        </authorList>
    </citation>
    <scope>NUCLEOTIDE SEQUENCE [LARGE SCALE GENOMIC DNA]</scope>
    <source>
        <strain>ATCC 700802 / V583</strain>
    </source>
</reference>
<keyword id="KW-0963">Cytoplasm</keyword>
<keyword id="KW-0441">Lipid A biosynthesis</keyword>
<keyword id="KW-0444">Lipid biosynthesis</keyword>
<keyword id="KW-0443">Lipid metabolism</keyword>
<keyword id="KW-0456">Lyase</keyword>
<keyword id="KW-1185">Reference proteome</keyword>
<dbReference type="EC" id="4.2.1.59"/>
<dbReference type="EMBL" id="AE016830">
    <property type="protein sequence ID" value="AAO80147.1"/>
    <property type="molecule type" value="Genomic_DNA"/>
</dbReference>
<dbReference type="RefSeq" id="NP_814076.1">
    <property type="nucleotide sequence ID" value="NC_004668.1"/>
</dbReference>
<dbReference type="SMR" id="Q820V3"/>
<dbReference type="STRING" id="226185.EF_0284"/>
<dbReference type="EnsemblBacteria" id="AAO80147">
    <property type="protein sequence ID" value="AAO80147"/>
    <property type="gene ID" value="EF_0284"/>
</dbReference>
<dbReference type="KEGG" id="efa:EF0284"/>
<dbReference type="PATRIC" id="fig|226185.45.peg.3045"/>
<dbReference type="eggNOG" id="COG0764">
    <property type="taxonomic scope" value="Bacteria"/>
</dbReference>
<dbReference type="HOGENOM" id="CLU_078912_1_1_9"/>
<dbReference type="BioCyc" id="MetaCyc:MONOMER-19311"/>
<dbReference type="Proteomes" id="UP000001415">
    <property type="component" value="Chromosome"/>
</dbReference>
<dbReference type="GO" id="GO:0005737">
    <property type="term" value="C:cytoplasm"/>
    <property type="evidence" value="ECO:0007669"/>
    <property type="project" value="UniProtKB-SubCell"/>
</dbReference>
<dbReference type="GO" id="GO:0016020">
    <property type="term" value="C:membrane"/>
    <property type="evidence" value="ECO:0007669"/>
    <property type="project" value="GOC"/>
</dbReference>
<dbReference type="GO" id="GO:0019171">
    <property type="term" value="F:(3R)-hydroxyacyl-[acyl-carrier-protein] dehydratase activity"/>
    <property type="evidence" value="ECO:0007669"/>
    <property type="project" value="UniProtKB-EC"/>
</dbReference>
<dbReference type="GO" id="GO:0006633">
    <property type="term" value="P:fatty acid biosynthetic process"/>
    <property type="evidence" value="ECO:0007669"/>
    <property type="project" value="UniProtKB-UniRule"/>
</dbReference>
<dbReference type="GO" id="GO:0009245">
    <property type="term" value="P:lipid A biosynthetic process"/>
    <property type="evidence" value="ECO:0007669"/>
    <property type="project" value="UniProtKB-UniRule"/>
</dbReference>
<dbReference type="CDD" id="cd01288">
    <property type="entry name" value="FabZ"/>
    <property type="match status" value="1"/>
</dbReference>
<dbReference type="FunFam" id="3.10.129.10:FF:000001">
    <property type="entry name" value="3-hydroxyacyl-[acyl-carrier-protein] dehydratase FabZ"/>
    <property type="match status" value="1"/>
</dbReference>
<dbReference type="Gene3D" id="3.10.129.10">
    <property type="entry name" value="Hotdog Thioesterase"/>
    <property type="match status" value="1"/>
</dbReference>
<dbReference type="HAMAP" id="MF_00406">
    <property type="entry name" value="FabZ"/>
    <property type="match status" value="1"/>
</dbReference>
<dbReference type="InterPro" id="IPR013114">
    <property type="entry name" value="FabA_FabZ"/>
</dbReference>
<dbReference type="InterPro" id="IPR010084">
    <property type="entry name" value="FabZ"/>
</dbReference>
<dbReference type="InterPro" id="IPR029069">
    <property type="entry name" value="HotDog_dom_sf"/>
</dbReference>
<dbReference type="NCBIfam" id="TIGR01750">
    <property type="entry name" value="fabZ"/>
    <property type="match status" value="1"/>
</dbReference>
<dbReference type="NCBIfam" id="NF000582">
    <property type="entry name" value="PRK00006.1"/>
    <property type="match status" value="1"/>
</dbReference>
<dbReference type="PANTHER" id="PTHR30272">
    <property type="entry name" value="3-HYDROXYACYL-[ACYL-CARRIER-PROTEIN] DEHYDRATASE"/>
    <property type="match status" value="1"/>
</dbReference>
<dbReference type="PANTHER" id="PTHR30272:SF1">
    <property type="entry name" value="3-HYDROXYACYL-[ACYL-CARRIER-PROTEIN] DEHYDRATASE"/>
    <property type="match status" value="1"/>
</dbReference>
<dbReference type="Pfam" id="PF07977">
    <property type="entry name" value="FabA"/>
    <property type="match status" value="1"/>
</dbReference>
<dbReference type="SUPFAM" id="SSF54637">
    <property type="entry name" value="Thioesterase/thiol ester dehydrase-isomerase"/>
    <property type="match status" value="1"/>
</dbReference>
<organism>
    <name type="scientific">Enterococcus faecalis (strain ATCC 700802 / V583)</name>
    <dbReference type="NCBI Taxonomy" id="226185"/>
    <lineage>
        <taxon>Bacteria</taxon>
        <taxon>Bacillati</taxon>
        <taxon>Bacillota</taxon>
        <taxon>Bacilli</taxon>
        <taxon>Lactobacillales</taxon>
        <taxon>Enterococcaceae</taxon>
        <taxon>Enterococcus</taxon>
    </lineage>
</organism>
<comment type="function">
    <text evidence="1">Involved in unsaturated fatty acids biosynthesis. Catalyzes the dehydration of short chain beta-hydroxyacyl-ACPs and long chain saturated and unsaturated beta-hydroxyacyl-ACPs (By similarity).</text>
</comment>
<comment type="catalytic activity">
    <reaction>
        <text>a (3R)-hydroxyacyl-[ACP] = a (2E)-enoyl-[ACP] + H2O</text>
        <dbReference type="Rhea" id="RHEA:13097"/>
        <dbReference type="Rhea" id="RHEA-COMP:9925"/>
        <dbReference type="Rhea" id="RHEA-COMP:9945"/>
        <dbReference type="ChEBI" id="CHEBI:15377"/>
        <dbReference type="ChEBI" id="CHEBI:78784"/>
        <dbReference type="ChEBI" id="CHEBI:78827"/>
        <dbReference type="EC" id="4.2.1.59"/>
    </reaction>
</comment>
<comment type="subcellular location">
    <subcellularLocation>
        <location evidence="1">Cytoplasm</location>
    </subcellularLocation>
</comment>
<comment type="similarity">
    <text evidence="2">Belongs to the thioester dehydratase family. FabZ subfamily.</text>
</comment>
<proteinExistence type="inferred from homology"/>
<feature type="chain" id="PRO_0000091676" description="3-hydroxyacyl-[acyl-carrier-protein] dehydratase FabZ">
    <location>
        <begin position="1"/>
        <end position="144"/>
    </location>
</feature>
<feature type="active site" evidence="1">
    <location>
        <position position="51"/>
    </location>
</feature>
<sequence length="144" mass="16242">MKKVMTATEIMEMIPNRYPICYIDYVDEIIPNEKIIATKNVTINEEFFQGHFPGNPTMPGVLIIEALAQVGSILILKMDQFEGETAYIGGINKAKFRQKVVPGDVLKLHFEIVKLRDFVGIGKATAYVEDKKVCECELTFIVGR</sequence>
<evidence type="ECO:0000250" key="1"/>
<evidence type="ECO:0000305" key="2"/>
<accession>Q820V3</accession>
<name>FABZ1_ENTFA</name>
<protein>
    <recommendedName>
        <fullName>3-hydroxyacyl-[acyl-carrier-protein] dehydratase FabZ</fullName>
        <ecNumber>4.2.1.59</ecNumber>
    </recommendedName>
    <alternativeName>
        <fullName>(3R)-hydroxymyristoyl-[acyl-carrier-protein] dehydratase</fullName>
        <shortName>(3R)-hydroxymyristoyl-ACP dehydrase</shortName>
    </alternativeName>
    <alternativeName>
        <fullName>Beta-hydroxyacyl-ACP dehydratase</fullName>
    </alternativeName>
</protein>
<gene>
    <name type="primary">fabZ1</name>
    <name type="synonym">fabZ-1</name>
    <name type="ordered locus">EF_0284</name>
</gene>